<feature type="chain" id="PRO_1000082945" description="UPF0761 membrane protein CBUD_0409">
    <location>
        <begin position="1"/>
        <end position="278"/>
    </location>
</feature>
<feature type="transmembrane region" description="Helical" evidence="1">
    <location>
        <begin position="38"/>
        <end position="58"/>
    </location>
</feature>
<feature type="transmembrane region" description="Helical" evidence="1">
    <location>
        <begin position="68"/>
        <end position="88"/>
    </location>
</feature>
<feature type="transmembrane region" description="Helical" evidence="1">
    <location>
        <begin position="92"/>
        <end position="112"/>
    </location>
</feature>
<feature type="transmembrane region" description="Helical" evidence="1">
    <location>
        <begin position="134"/>
        <end position="154"/>
    </location>
</feature>
<feature type="transmembrane region" description="Helical" evidence="1">
    <location>
        <begin position="177"/>
        <end position="197"/>
    </location>
</feature>
<feature type="transmembrane region" description="Helical" evidence="1">
    <location>
        <begin position="207"/>
        <end position="227"/>
    </location>
</feature>
<feature type="transmembrane region" description="Helical" evidence="1">
    <location>
        <begin position="244"/>
        <end position="264"/>
    </location>
</feature>
<gene>
    <name type="ordered locus">CBUD_0409</name>
</gene>
<reference key="1">
    <citation type="journal article" date="2009" name="Infect. Immun.">
        <title>Comparative genomics reveal extensive transposon-mediated genomic plasticity and diversity among potential effector proteins within the genus Coxiella.</title>
        <authorList>
            <person name="Beare P.A."/>
            <person name="Unsworth N."/>
            <person name="Andoh M."/>
            <person name="Voth D.E."/>
            <person name="Omsland A."/>
            <person name="Gilk S.D."/>
            <person name="Williams K.P."/>
            <person name="Sobral B.W."/>
            <person name="Kupko J.J. III"/>
            <person name="Porcella S.F."/>
            <person name="Samuel J.E."/>
            <person name="Heinzen R.A."/>
        </authorList>
    </citation>
    <scope>NUCLEOTIDE SEQUENCE [LARGE SCALE GENOMIC DNA]</scope>
    <source>
        <strain>Dugway 5J108-111</strain>
    </source>
</reference>
<comment type="subcellular location">
    <subcellularLocation>
        <location evidence="1">Cell inner membrane</location>
        <topology evidence="1">Multi-pass membrane protein</topology>
    </subcellularLocation>
</comment>
<comment type="similarity">
    <text evidence="1">Belongs to the UPF0761 family.</text>
</comment>
<dbReference type="EMBL" id="CP000733">
    <property type="protein sequence ID" value="ABS78189.1"/>
    <property type="molecule type" value="Genomic_DNA"/>
</dbReference>
<dbReference type="RefSeq" id="WP_005772112.1">
    <property type="nucleotide sequence ID" value="NC_009727.1"/>
</dbReference>
<dbReference type="KEGG" id="cbd:CBUD_0409"/>
<dbReference type="HOGENOM" id="CLU_032288_0_0_6"/>
<dbReference type="Proteomes" id="UP000008555">
    <property type="component" value="Chromosome"/>
</dbReference>
<dbReference type="GO" id="GO:0005886">
    <property type="term" value="C:plasma membrane"/>
    <property type="evidence" value="ECO:0007669"/>
    <property type="project" value="UniProtKB-SubCell"/>
</dbReference>
<dbReference type="HAMAP" id="MF_00672">
    <property type="entry name" value="UPF0761"/>
    <property type="match status" value="1"/>
</dbReference>
<dbReference type="InterPro" id="IPR023679">
    <property type="entry name" value="UPF0761_bac"/>
</dbReference>
<dbReference type="InterPro" id="IPR017039">
    <property type="entry name" value="Virul_fac_BrkB"/>
</dbReference>
<dbReference type="NCBIfam" id="TIGR00765">
    <property type="entry name" value="yihY_not_rbn"/>
    <property type="match status" value="1"/>
</dbReference>
<dbReference type="PANTHER" id="PTHR30213">
    <property type="entry name" value="INNER MEMBRANE PROTEIN YHJD"/>
    <property type="match status" value="1"/>
</dbReference>
<dbReference type="PANTHER" id="PTHR30213:SF0">
    <property type="entry name" value="UPF0761 MEMBRANE PROTEIN YIHY"/>
    <property type="match status" value="1"/>
</dbReference>
<dbReference type="Pfam" id="PF03631">
    <property type="entry name" value="Virul_fac_BrkB"/>
    <property type="match status" value="1"/>
</dbReference>
<dbReference type="PIRSF" id="PIRSF035875">
    <property type="entry name" value="RNase_BN"/>
    <property type="match status" value="1"/>
</dbReference>
<protein>
    <recommendedName>
        <fullName evidence="1">UPF0761 membrane protein CBUD_0409</fullName>
    </recommendedName>
</protein>
<accession>A9KF31</accession>
<name>Y409_COXBN</name>
<proteinExistence type="inferred from homology"/>
<organism>
    <name type="scientific">Coxiella burnetii (strain Dugway 5J108-111)</name>
    <dbReference type="NCBI Taxonomy" id="434922"/>
    <lineage>
        <taxon>Bacteria</taxon>
        <taxon>Pseudomonadati</taxon>
        <taxon>Pseudomonadota</taxon>
        <taxon>Gammaproteobacteria</taxon>
        <taxon>Legionellales</taxon>
        <taxon>Coxiellaceae</taxon>
        <taxon>Coxiella</taxon>
    </lineage>
</organism>
<keyword id="KW-0997">Cell inner membrane</keyword>
<keyword id="KW-1003">Cell membrane</keyword>
<keyword id="KW-0472">Membrane</keyword>
<keyword id="KW-0812">Transmembrane</keyword>
<keyword id="KW-1133">Transmembrane helix</keyword>
<sequence>MTIYRFFKRSAFTLAYIYRRFHEEGCAYRATALAYTTLLALVPLTIVAFTLLSFVPAFQGVGVRLQNLIWENFVPTSAGMVAAYLSQLTQNVTGLSIINIFFLGIVALLLMYNINRAFVAIWHTEHHFRLSLHFLIYFMVLLLSPFLLGAVMLLGTFLVQSPLVTDLIGWPYLGKGLLFVLPYVLIFITFTLFNWVLPSAKVKLSHAVIGGLVTTVLFELAKFAFTVYLKFFPTYRVIYGALSVIPIFLVWLYVSWTIILLGAVVSNVIACGIPEKYK</sequence>
<evidence type="ECO:0000255" key="1">
    <source>
        <dbReference type="HAMAP-Rule" id="MF_00672"/>
    </source>
</evidence>